<organism>
    <name type="scientific">Salmonella dublin (strain CT_02021853)</name>
    <dbReference type="NCBI Taxonomy" id="439851"/>
    <lineage>
        <taxon>Bacteria</taxon>
        <taxon>Pseudomonadati</taxon>
        <taxon>Pseudomonadota</taxon>
        <taxon>Gammaproteobacteria</taxon>
        <taxon>Enterobacterales</taxon>
        <taxon>Enterobacteriaceae</taxon>
        <taxon>Salmonella</taxon>
    </lineage>
</organism>
<evidence type="ECO:0000255" key="1">
    <source>
        <dbReference type="HAMAP-Rule" id="MF_01198"/>
    </source>
</evidence>
<feature type="chain" id="PRO_1000138491" description="Anti-adapter protein IraP">
    <location>
        <begin position="1"/>
        <end position="86"/>
    </location>
</feature>
<feature type="coiled-coil region" evidence="1">
    <location>
        <begin position="1"/>
        <end position="36"/>
    </location>
</feature>
<reference key="1">
    <citation type="journal article" date="2011" name="J. Bacteriol.">
        <title>Comparative genomics of 28 Salmonella enterica isolates: evidence for CRISPR-mediated adaptive sublineage evolution.</title>
        <authorList>
            <person name="Fricke W.F."/>
            <person name="Mammel M.K."/>
            <person name="McDermott P.F."/>
            <person name="Tartera C."/>
            <person name="White D.G."/>
            <person name="Leclerc J.E."/>
            <person name="Ravel J."/>
            <person name="Cebula T.A."/>
        </authorList>
    </citation>
    <scope>NUCLEOTIDE SEQUENCE [LARGE SCALE GENOMIC DNA]</scope>
    <source>
        <strain>CT_02021853</strain>
    </source>
</reference>
<comment type="function">
    <text evidence="1">Inhibits RpoS proteolysis by regulating RssB activity, thereby increasing the stability of the sigma stress factor RpoS especially during phosphate and magnesium starvation, but also in stationary phase and during nitrogen starvation. Its effect on RpoS stability is due to its interaction with RssB, which probably blocks the interaction of RssB with RpoS, and the consequent delivery of the RssB-RpoS complex to the ClpXP protein degradation pathway.</text>
</comment>
<comment type="subunit">
    <text evidence="1">Interacts with RssB.</text>
</comment>
<comment type="subcellular location">
    <subcellularLocation>
        <location evidence="1">Cytoplasm</location>
    </subcellularLocation>
</comment>
<comment type="similarity">
    <text evidence="1">Belongs to the IraP family.</text>
</comment>
<accession>B5FK32</accession>
<gene>
    <name evidence="1" type="primary">iraP</name>
    <name type="ordered locus">SeD_A0419</name>
</gene>
<name>IRAP_SALDC</name>
<proteinExistence type="inferred from homology"/>
<sequence length="86" mass="9883">MKNLIAELLLKLAQKEEESKELVAQVEALEIIVTAMLRNMAQNEQEMLIRQVEGALEGVKPDASVPDHDTELLRQYVKKLLRHPRH</sequence>
<protein>
    <recommendedName>
        <fullName evidence="1">Anti-adapter protein IraP</fullName>
    </recommendedName>
</protein>
<dbReference type="EMBL" id="CP001144">
    <property type="protein sequence ID" value="ACH74766.1"/>
    <property type="molecule type" value="Genomic_DNA"/>
</dbReference>
<dbReference type="RefSeq" id="WP_001518423.1">
    <property type="nucleotide sequence ID" value="NC_011205.1"/>
</dbReference>
<dbReference type="SMR" id="B5FK32"/>
<dbReference type="KEGG" id="sed:SeD_A0419"/>
<dbReference type="HOGENOM" id="CLU_169517_0_0_6"/>
<dbReference type="Proteomes" id="UP000008322">
    <property type="component" value="Chromosome"/>
</dbReference>
<dbReference type="GO" id="GO:0005737">
    <property type="term" value="C:cytoplasm"/>
    <property type="evidence" value="ECO:0007669"/>
    <property type="project" value="UniProtKB-SubCell"/>
</dbReference>
<dbReference type="GO" id="GO:0009267">
    <property type="term" value="P:cellular response to starvation"/>
    <property type="evidence" value="ECO:0007669"/>
    <property type="project" value="UniProtKB-UniRule"/>
</dbReference>
<dbReference type="HAMAP" id="MF_01198">
    <property type="entry name" value="Anti_adapt_IraP"/>
    <property type="match status" value="1"/>
</dbReference>
<dbReference type="InterPro" id="IPR019732">
    <property type="entry name" value="SigmaS_Anti-adapt_IraP"/>
</dbReference>
<dbReference type="NCBIfam" id="NF007598">
    <property type="entry name" value="PRK10244.1"/>
    <property type="match status" value="1"/>
</dbReference>
<dbReference type="Pfam" id="PF10796">
    <property type="entry name" value="Anti-adapt_IraP"/>
    <property type="match status" value="1"/>
</dbReference>
<keyword id="KW-0175">Coiled coil</keyword>
<keyword id="KW-0963">Cytoplasm</keyword>
<keyword id="KW-0346">Stress response</keyword>